<protein>
    <recommendedName>
        <fullName evidence="1">Ribosomal RNA small subunit methyltransferase G</fullName>
        <ecNumber evidence="1">2.1.1.170</ecNumber>
    </recommendedName>
    <alternativeName>
        <fullName evidence="1">16S rRNA 7-methylguanosine methyltransferase</fullName>
        <shortName evidence="1">16S rRNA m7G methyltransferase</shortName>
    </alternativeName>
</protein>
<gene>
    <name evidence="1" type="primary">rsmG</name>
    <name type="ordered locus">GOX1064</name>
</gene>
<sequence length="193" mass="21236">MTTVSRETHERLERFADLLVQWNAKINLVSPRDIAQLWPRHIEDSLQLAELIPEGKTITDLGSGGGFPGIILAIATGNPVTLIESDQRKCAFLREAGRICEARVTVIAKRIEAASPPPADIITARALAPLNRLLEWARPLLKEDGFCLFLKGQKAQAELTEASADWHMSHSIIPSRTDPGGAIIKVSDFKRVV</sequence>
<keyword id="KW-0963">Cytoplasm</keyword>
<keyword id="KW-0489">Methyltransferase</keyword>
<keyword id="KW-1185">Reference proteome</keyword>
<keyword id="KW-0698">rRNA processing</keyword>
<keyword id="KW-0949">S-adenosyl-L-methionine</keyword>
<keyword id="KW-0808">Transferase</keyword>
<reference key="1">
    <citation type="journal article" date="2005" name="Nat. Biotechnol.">
        <title>Complete genome sequence of the acetic acid bacterium Gluconobacter oxydans.</title>
        <authorList>
            <person name="Prust C."/>
            <person name="Hoffmeister M."/>
            <person name="Liesegang H."/>
            <person name="Wiezer A."/>
            <person name="Fricke W.F."/>
            <person name="Ehrenreich A."/>
            <person name="Gottschalk G."/>
            <person name="Deppenmeier U."/>
        </authorList>
    </citation>
    <scope>NUCLEOTIDE SEQUENCE [LARGE SCALE GENOMIC DNA]</scope>
    <source>
        <strain>621H</strain>
    </source>
</reference>
<dbReference type="EC" id="2.1.1.170" evidence="1"/>
<dbReference type="EMBL" id="CP000009">
    <property type="protein sequence ID" value="AAW60833.1"/>
    <property type="molecule type" value="Genomic_DNA"/>
</dbReference>
<dbReference type="RefSeq" id="WP_011252625.1">
    <property type="nucleotide sequence ID" value="NC_006677.1"/>
</dbReference>
<dbReference type="SMR" id="Q5FS13"/>
<dbReference type="STRING" id="290633.GOX1064"/>
<dbReference type="KEGG" id="gox:GOX1064"/>
<dbReference type="eggNOG" id="COG0357">
    <property type="taxonomic scope" value="Bacteria"/>
</dbReference>
<dbReference type="HOGENOM" id="CLU_065341_1_1_5"/>
<dbReference type="Proteomes" id="UP000006375">
    <property type="component" value="Chromosome"/>
</dbReference>
<dbReference type="GO" id="GO:0005829">
    <property type="term" value="C:cytosol"/>
    <property type="evidence" value="ECO:0007669"/>
    <property type="project" value="TreeGrafter"/>
</dbReference>
<dbReference type="GO" id="GO:0070043">
    <property type="term" value="F:rRNA (guanine-N7-)-methyltransferase activity"/>
    <property type="evidence" value="ECO:0007669"/>
    <property type="project" value="UniProtKB-UniRule"/>
</dbReference>
<dbReference type="CDD" id="cd02440">
    <property type="entry name" value="AdoMet_MTases"/>
    <property type="match status" value="1"/>
</dbReference>
<dbReference type="Gene3D" id="3.40.50.150">
    <property type="entry name" value="Vaccinia Virus protein VP39"/>
    <property type="match status" value="1"/>
</dbReference>
<dbReference type="HAMAP" id="MF_00074">
    <property type="entry name" value="16SrRNA_methyltr_G"/>
    <property type="match status" value="1"/>
</dbReference>
<dbReference type="InterPro" id="IPR003682">
    <property type="entry name" value="rRNA_ssu_MeTfrase_G"/>
</dbReference>
<dbReference type="InterPro" id="IPR029063">
    <property type="entry name" value="SAM-dependent_MTases_sf"/>
</dbReference>
<dbReference type="NCBIfam" id="TIGR00138">
    <property type="entry name" value="rsmG_gidB"/>
    <property type="match status" value="1"/>
</dbReference>
<dbReference type="PANTHER" id="PTHR31760">
    <property type="entry name" value="S-ADENOSYL-L-METHIONINE-DEPENDENT METHYLTRANSFERASES SUPERFAMILY PROTEIN"/>
    <property type="match status" value="1"/>
</dbReference>
<dbReference type="PANTHER" id="PTHR31760:SF0">
    <property type="entry name" value="S-ADENOSYL-L-METHIONINE-DEPENDENT METHYLTRANSFERASES SUPERFAMILY PROTEIN"/>
    <property type="match status" value="1"/>
</dbReference>
<dbReference type="Pfam" id="PF02527">
    <property type="entry name" value="GidB"/>
    <property type="match status" value="1"/>
</dbReference>
<dbReference type="PIRSF" id="PIRSF003078">
    <property type="entry name" value="GidB"/>
    <property type="match status" value="1"/>
</dbReference>
<dbReference type="SUPFAM" id="SSF53335">
    <property type="entry name" value="S-adenosyl-L-methionine-dependent methyltransferases"/>
    <property type="match status" value="1"/>
</dbReference>
<feature type="chain" id="PRO_0000184257" description="Ribosomal RNA small subunit methyltransferase G">
    <location>
        <begin position="1"/>
        <end position="193"/>
    </location>
</feature>
<feature type="binding site" evidence="1">
    <location>
        <position position="62"/>
    </location>
    <ligand>
        <name>S-adenosyl-L-methionine</name>
        <dbReference type="ChEBI" id="CHEBI:59789"/>
    </ligand>
</feature>
<feature type="binding site" evidence="1">
    <location>
        <position position="67"/>
    </location>
    <ligand>
        <name>S-adenosyl-L-methionine</name>
        <dbReference type="ChEBI" id="CHEBI:59789"/>
    </ligand>
</feature>
<feature type="binding site" evidence="1">
    <location>
        <begin position="111"/>
        <end position="112"/>
    </location>
    <ligand>
        <name>S-adenosyl-L-methionine</name>
        <dbReference type="ChEBI" id="CHEBI:59789"/>
    </ligand>
</feature>
<feature type="binding site" evidence="1">
    <location>
        <position position="125"/>
    </location>
    <ligand>
        <name>S-adenosyl-L-methionine</name>
        <dbReference type="ChEBI" id="CHEBI:59789"/>
    </ligand>
</feature>
<evidence type="ECO:0000255" key="1">
    <source>
        <dbReference type="HAMAP-Rule" id="MF_00074"/>
    </source>
</evidence>
<comment type="function">
    <text evidence="1">Specifically methylates the N7 position of guanine in position 527 of 16S rRNA.</text>
</comment>
<comment type="catalytic activity">
    <reaction evidence="1">
        <text>guanosine(527) in 16S rRNA + S-adenosyl-L-methionine = N(7)-methylguanosine(527) in 16S rRNA + S-adenosyl-L-homocysteine</text>
        <dbReference type="Rhea" id="RHEA:42732"/>
        <dbReference type="Rhea" id="RHEA-COMP:10209"/>
        <dbReference type="Rhea" id="RHEA-COMP:10210"/>
        <dbReference type="ChEBI" id="CHEBI:57856"/>
        <dbReference type="ChEBI" id="CHEBI:59789"/>
        <dbReference type="ChEBI" id="CHEBI:74269"/>
        <dbReference type="ChEBI" id="CHEBI:74480"/>
        <dbReference type="EC" id="2.1.1.170"/>
    </reaction>
</comment>
<comment type="subcellular location">
    <subcellularLocation>
        <location evidence="1">Cytoplasm</location>
    </subcellularLocation>
</comment>
<comment type="similarity">
    <text evidence="1">Belongs to the methyltransferase superfamily. RNA methyltransferase RsmG family.</text>
</comment>
<accession>Q5FS13</accession>
<organism>
    <name type="scientific">Gluconobacter oxydans (strain 621H)</name>
    <name type="common">Gluconobacter suboxydans</name>
    <dbReference type="NCBI Taxonomy" id="290633"/>
    <lineage>
        <taxon>Bacteria</taxon>
        <taxon>Pseudomonadati</taxon>
        <taxon>Pseudomonadota</taxon>
        <taxon>Alphaproteobacteria</taxon>
        <taxon>Acetobacterales</taxon>
        <taxon>Acetobacteraceae</taxon>
        <taxon>Gluconobacter</taxon>
    </lineage>
</organism>
<proteinExistence type="inferred from homology"/>
<name>RSMG_GLUOX</name>